<keyword id="KW-0002">3D-structure</keyword>
<keyword id="KW-0378">Hydrolase</keyword>
<keyword id="KW-0460">Magnesium</keyword>
<keyword id="KW-0479">Metal-binding</keyword>
<keyword id="KW-0904">Protein phosphatase</keyword>
<keyword id="KW-1185">Reference proteome</keyword>
<accession>Q9D967</accession>
<gene>
    <name type="primary">Mdp1</name>
</gene>
<sequence>MTRLPKLAVFDLDYTLWPFWVDTHVDPPFHKSSDGTVRDRRGQNIQLYPEVPEVLGRLQSLGVPVAAASRTSEIQGANQLLELFDLGKYFIQREIYPGSKVTHFERLHHKTGVPFSQMVFFDDENRNIIDVGRLGVTCIHIRDGMSLQTLTQGLETFAKAQAGL</sequence>
<evidence type="ECO:0000269" key="1">
    <source>
    </source>
</evidence>
<evidence type="ECO:0000269" key="2">
    <source>
    </source>
</evidence>
<evidence type="ECO:0000269" key="3">
    <source>
    </source>
</evidence>
<evidence type="ECO:0000305" key="4"/>
<evidence type="ECO:0007829" key="5">
    <source>
        <dbReference type="PDB" id="1U7O"/>
    </source>
</evidence>
<evidence type="ECO:0007829" key="6">
    <source>
        <dbReference type="PDB" id="1U7P"/>
    </source>
</evidence>
<dbReference type="EC" id="3.1.3.-"/>
<dbReference type="EC" id="3.1.3.48"/>
<dbReference type="EMBL" id="AF230273">
    <property type="protein sequence ID" value="AAK00763.1"/>
    <property type="molecule type" value="mRNA"/>
</dbReference>
<dbReference type="EMBL" id="AK007319">
    <property type="protein sequence ID" value="BAB24954.1"/>
    <property type="molecule type" value="mRNA"/>
</dbReference>
<dbReference type="EMBL" id="AK160438">
    <property type="protein sequence ID" value="BAE35788.1"/>
    <property type="molecule type" value="mRNA"/>
</dbReference>
<dbReference type="EMBL" id="BC046613">
    <property type="protein sequence ID" value="AAH46613.1"/>
    <property type="molecule type" value="mRNA"/>
</dbReference>
<dbReference type="CCDS" id="CCDS27123.1"/>
<dbReference type="RefSeq" id="NP_075886.1">
    <property type="nucleotide sequence ID" value="NM_023397.5"/>
</dbReference>
<dbReference type="PDB" id="1U7O">
    <property type="method" value="X-ray"/>
    <property type="resolution" value="1.90 A"/>
    <property type="chains" value="A=1-164"/>
</dbReference>
<dbReference type="PDB" id="1U7P">
    <property type="method" value="X-ray"/>
    <property type="resolution" value="1.90 A"/>
    <property type="chains" value="A/B/C/D=1-164"/>
</dbReference>
<dbReference type="PDBsum" id="1U7O"/>
<dbReference type="PDBsum" id="1U7P"/>
<dbReference type="SMR" id="Q9D967"/>
<dbReference type="BioGRID" id="212506">
    <property type="interactions" value="3"/>
</dbReference>
<dbReference type="FunCoup" id="Q9D967">
    <property type="interactions" value="470"/>
</dbReference>
<dbReference type="STRING" id="10090.ENSMUSP00000002400"/>
<dbReference type="iPTMnet" id="Q9D967"/>
<dbReference type="PhosphoSitePlus" id="Q9D967"/>
<dbReference type="CPTAC" id="non-CPTAC-3839"/>
<dbReference type="jPOST" id="Q9D967"/>
<dbReference type="PaxDb" id="10090-ENSMUSP00000002400"/>
<dbReference type="PeptideAtlas" id="Q9D967"/>
<dbReference type="ProteomicsDB" id="293468"/>
<dbReference type="Pumba" id="Q9D967"/>
<dbReference type="DNASU" id="67881"/>
<dbReference type="Ensembl" id="ENSMUST00000002400.7">
    <property type="protein sequence ID" value="ENSMUSP00000002400.7"/>
    <property type="gene ID" value="ENSMUSG00000002329.8"/>
</dbReference>
<dbReference type="GeneID" id="67881"/>
<dbReference type="KEGG" id="mmu:67881"/>
<dbReference type="UCSC" id="uc007uaa.2">
    <property type="organism name" value="mouse"/>
</dbReference>
<dbReference type="AGR" id="MGI:1915131"/>
<dbReference type="CTD" id="145553"/>
<dbReference type="MGI" id="MGI:1915131">
    <property type="gene designation" value="Mdp1"/>
</dbReference>
<dbReference type="VEuPathDB" id="HostDB:ENSMUSG00000002329"/>
<dbReference type="eggNOG" id="KOG4549">
    <property type="taxonomic scope" value="Eukaryota"/>
</dbReference>
<dbReference type="GeneTree" id="ENSGT00940000165797"/>
<dbReference type="HOGENOM" id="CLU_071162_0_0_1"/>
<dbReference type="InParanoid" id="Q9D967"/>
<dbReference type="OMA" id="GVWAWRK"/>
<dbReference type="OrthoDB" id="2865258at2759"/>
<dbReference type="PhylomeDB" id="Q9D967"/>
<dbReference type="TreeFam" id="TF328413"/>
<dbReference type="SABIO-RK" id="Q9D967"/>
<dbReference type="BioGRID-ORCS" id="67881">
    <property type="hits" value="3 hits in 77 CRISPR screens"/>
</dbReference>
<dbReference type="ChiTaRS" id="Mdp1">
    <property type="organism name" value="mouse"/>
</dbReference>
<dbReference type="EvolutionaryTrace" id="Q9D967"/>
<dbReference type="PRO" id="PR:Q9D967"/>
<dbReference type="Proteomes" id="UP000000589">
    <property type="component" value="Chromosome 14"/>
</dbReference>
<dbReference type="RNAct" id="Q9D967">
    <property type="molecule type" value="protein"/>
</dbReference>
<dbReference type="Bgee" id="ENSMUSG00000002329">
    <property type="expression patterns" value="Expressed in heart right ventricle and 254 other cell types or tissues"/>
</dbReference>
<dbReference type="GO" id="GO:0046872">
    <property type="term" value="F:metal ion binding"/>
    <property type="evidence" value="ECO:0007669"/>
    <property type="project" value="UniProtKB-KW"/>
</dbReference>
<dbReference type="GO" id="GO:0004725">
    <property type="term" value="F:protein tyrosine phosphatase activity"/>
    <property type="evidence" value="ECO:0007669"/>
    <property type="project" value="UniProtKB-EC"/>
</dbReference>
<dbReference type="CDD" id="cd07501">
    <property type="entry name" value="HAD_MDP-1_like"/>
    <property type="match status" value="1"/>
</dbReference>
<dbReference type="FunFam" id="3.40.50.1000:FF:000127">
    <property type="entry name" value="Magnesium-dependent phosphatase 1"/>
    <property type="match status" value="1"/>
</dbReference>
<dbReference type="Gene3D" id="3.40.50.1000">
    <property type="entry name" value="HAD superfamily/HAD-like"/>
    <property type="match status" value="1"/>
</dbReference>
<dbReference type="InterPro" id="IPR036412">
    <property type="entry name" value="HAD-like_sf"/>
</dbReference>
<dbReference type="InterPro" id="IPR023214">
    <property type="entry name" value="HAD_sf"/>
</dbReference>
<dbReference type="InterPro" id="IPR010033">
    <property type="entry name" value="HAD_SF_ppase_IIIC"/>
</dbReference>
<dbReference type="InterPro" id="IPR035679">
    <property type="entry name" value="MDP-1_euk"/>
</dbReference>
<dbReference type="InterPro" id="IPR010036">
    <property type="entry name" value="MDP_1_eu_arc"/>
</dbReference>
<dbReference type="NCBIfam" id="TIGR01681">
    <property type="entry name" value="HAD-SF-IIIC"/>
    <property type="match status" value="1"/>
</dbReference>
<dbReference type="NCBIfam" id="TIGR01685">
    <property type="entry name" value="MDP-1"/>
    <property type="match status" value="1"/>
</dbReference>
<dbReference type="PANTHER" id="PTHR17901:SF14">
    <property type="entry name" value="MAGNESIUM-DEPENDENT PHOSPHATASE 1"/>
    <property type="match status" value="1"/>
</dbReference>
<dbReference type="PANTHER" id="PTHR17901">
    <property type="entry name" value="MAGNESIUM-DEPENDENT PHOSPHATASE 1 MDP1"/>
    <property type="match status" value="1"/>
</dbReference>
<dbReference type="Pfam" id="PF12689">
    <property type="entry name" value="Acid_PPase"/>
    <property type="match status" value="1"/>
</dbReference>
<dbReference type="SFLD" id="SFLDG01129">
    <property type="entry name" value="C1.5:_HAD__Beta-PGM__Phosphata"/>
    <property type="match status" value="1"/>
</dbReference>
<dbReference type="SFLD" id="SFLDF00041">
    <property type="entry name" value="mdp-1"/>
    <property type="match status" value="1"/>
</dbReference>
<dbReference type="SUPFAM" id="SSF56784">
    <property type="entry name" value="HAD-like"/>
    <property type="match status" value="1"/>
</dbReference>
<name>MGDP1_MOUSE</name>
<comment type="function">
    <text evidence="1 2 3">Magnesium-dependent phosphatase which may act as a tyrosine phosphatase.</text>
</comment>
<comment type="catalytic activity">
    <reaction>
        <text>O-phospho-L-tyrosyl-[protein] + H2O = L-tyrosyl-[protein] + phosphate</text>
        <dbReference type="Rhea" id="RHEA:10684"/>
        <dbReference type="Rhea" id="RHEA-COMP:10136"/>
        <dbReference type="Rhea" id="RHEA-COMP:20101"/>
        <dbReference type="ChEBI" id="CHEBI:15377"/>
        <dbReference type="ChEBI" id="CHEBI:43474"/>
        <dbReference type="ChEBI" id="CHEBI:46858"/>
        <dbReference type="ChEBI" id="CHEBI:61978"/>
        <dbReference type="EC" id="3.1.3.48"/>
    </reaction>
</comment>
<comment type="cofactor">
    <cofactor evidence="1">
        <name>Mg(2+)</name>
        <dbReference type="ChEBI" id="CHEBI:18420"/>
    </cofactor>
</comment>
<comment type="activity regulation">
    <text evidence="1">Inhibited by vanadate and zinc, and slightly by calcium.</text>
</comment>
<comment type="biophysicochemical properties">
    <kinetics>
        <KM evidence="1">9.5 mM for ribose-5-phosphate</KM>
        <KM evidence="1">5.6 mM for 2-deoxy-ribose-5-phosphate</KM>
        <KM evidence="1">15 mM for phosphotyrosine</KM>
        <KM evidence="1">1.1 mM for arabinose-5-phosphate</KM>
        <KM evidence="1">21 mM for fructose-6-phosphate</KM>
        <KM evidence="1">12 mM for 5'-CMP</KM>
        <KM evidence="1">1.7 mM for pNPP</KM>
        <KM evidence="1">26 mM for 5'-AMP</KM>
        <KM evidence="1">31 mM for glucose-6-phosphate</KM>
        <text>Dephosphorylates ribose-5-phosphate, 2-deoxy-ribose-5-phosphate, phosphotyrosine, arabinose-5-phosphate, fructose-6-phosphate, 5'-CMP, pNPP, 5'-AMP and glucose-6-phosphate with a decreasing relative rate of 1, 0.9, 0.8, 0.6, 0.5, 0.2, 0.2, 0.2 and 0.06. Dephosphorylates phosphotyrosine with a greater than 100 fold rate over phosphoserine or phosphothreonine.</text>
    </kinetics>
    <phDependence>
        <text evidence="1">Optimum pH is 5.3.</text>
    </phDependence>
</comment>
<comment type="similarity">
    <text evidence="4">Belongs to the HAD-like hydrolase superfamily.</text>
</comment>
<reference key="1">
    <citation type="journal article" date="2000" name="Biochemistry">
        <title>MDP-1: a novel eukaryotic magnesium-dependent phosphatase.</title>
        <authorList>
            <person name="Selengut J.D."/>
            <person name="Levine R.L."/>
        </authorList>
    </citation>
    <scope>NUCLEOTIDE SEQUENCE [MRNA]</scope>
    <scope>FUNCTION</scope>
    <scope>BIOPHYSICOCHEMICAL PROPERTIES</scope>
    <scope>COFACTOR</scope>
    <scope>ACTIVITY REGULATION</scope>
    <scope>MUTAGENESIS OF HIS-103 AND CYS-138</scope>
</reference>
<reference key="2">
    <citation type="journal article" date="2005" name="Science">
        <title>The transcriptional landscape of the mammalian genome.</title>
        <authorList>
            <person name="Carninci P."/>
            <person name="Kasukawa T."/>
            <person name="Katayama S."/>
            <person name="Gough J."/>
            <person name="Frith M.C."/>
            <person name="Maeda N."/>
            <person name="Oyama R."/>
            <person name="Ravasi T."/>
            <person name="Lenhard B."/>
            <person name="Wells C."/>
            <person name="Kodzius R."/>
            <person name="Shimokawa K."/>
            <person name="Bajic V.B."/>
            <person name="Brenner S.E."/>
            <person name="Batalov S."/>
            <person name="Forrest A.R."/>
            <person name="Zavolan M."/>
            <person name="Davis M.J."/>
            <person name="Wilming L.G."/>
            <person name="Aidinis V."/>
            <person name="Allen J.E."/>
            <person name="Ambesi-Impiombato A."/>
            <person name="Apweiler R."/>
            <person name="Aturaliya R.N."/>
            <person name="Bailey T.L."/>
            <person name="Bansal M."/>
            <person name="Baxter L."/>
            <person name="Beisel K.W."/>
            <person name="Bersano T."/>
            <person name="Bono H."/>
            <person name="Chalk A.M."/>
            <person name="Chiu K.P."/>
            <person name="Choudhary V."/>
            <person name="Christoffels A."/>
            <person name="Clutterbuck D.R."/>
            <person name="Crowe M.L."/>
            <person name="Dalla E."/>
            <person name="Dalrymple B.P."/>
            <person name="de Bono B."/>
            <person name="Della Gatta G."/>
            <person name="di Bernardo D."/>
            <person name="Down T."/>
            <person name="Engstrom P."/>
            <person name="Fagiolini M."/>
            <person name="Faulkner G."/>
            <person name="Fletcher C.F."/>
            <person name="Fukushima T."/>
            <person name="Furuno M."/>
            <person name="Futaki S."/>
            <person name="Gariboldi M."/>
            <person name="Georgii-Hemming P."/>
            <person name="Gingeras T.R."/>
            <person name="Gojobori T."/>
            <person name="Green R.E."/>
            <person name="Gustincich S."/>
            <person name="Harbers M."/>
            <person name="Hayashi Y."/>
            <person name="Hensch T.K."/>
            <person name="Hirokawa N."/>
            <person name="Hill D."/>
            <person name="Huminiecki L."/>
            <person name="Iacono M."/>
            <person name="Ikeo K."/>
            <person name="Iwama A."/>
            <person name="Ishikawa T."/>
            <person name="Jakt M."/>
            <person name="Kanapin A."/>
            <person name="Katoh M."/>
            <person name="Kawasawa Y."/>
            <person name="Kelso J."/>
            <person name="Kitamura H."/>
            <person name="Kitano H."/>
            <person name="Kollias G."/>
            <person name="Krishnan S.P."/>
            <person name="Kruger A."/>
            <person name="Kummerfeld S.K."/>
            <person name="Kurochkin I.V."/>
            <person name="Lareau L.F."/>
            <person name="Lazarevic D."/>
            <person name="Lipovich L."/>
            <person name="Liu J."/>
            <person name="Liuni S."/>
            <person name="McWilliam S."/>
            <person name="Madan Babu M."/>
            <person name="Madera M."/>
            <person name="Marchionni L."/>
            <person name="Matsuda H."/>
            <person name="Matsuzawa S."/>
            <person name="Miki H."/>
            <person name="Mignone F."/>
            <person name="Miyake S."/>
            <person name="Morris K."/>
            <person name="Mottagui-Tabar S."/>
            <person name="Mulder N."/>
            <person name="Nakano N."/>
            <person name="Nakauchi H."/>
            <person name="Ng P."/>
            <person name="Nilsson R."/>
            <person name="Nishiguchi S."/>
            <person name="Nishikawa S."/>
            <person name="Nori F."/>
            <person name="Ohara O."/>
            <person name="Okazaki Y."/>
            <person name="Orlando V."/>
            <person name="Pang K.C."/>
            <person name="Pavan W.J."/>
            <person name="Pavesi G."/>
            <person name="Pesole G."/>
            <person name="Petrovsky N."/>
            <person name="Piazza S."/>
            <person name="Reed J."/>
            <person name="Reid J.F."/>
            <person name="Ring B.Z."/>
            <person name="Ringwald M."/>
            <person name="Rost B."/>
            <person name="Ruan Y."/>
            <person name="Salzberg S.L."/>
            <person name="Sandelin A."/>
            <person name="Schneider C."/>
            <person name="Schoenbach C."/>
            <person name="Sekiguchi K."/>
            <person name="Semple C.A."/>
            <person name="Seno S."/>
            <person name="Sessa L."/>
            <person name="Sheng Y."/>
            <person name="Shibata Y."/>
            <person name="Shimada H."/>
            <person name="Shimada K."/>
            <person name="Silva D."/>
            <person name="Sinclair B."/>
            <person name="Sperling S."/>
            <person name="Stupka E."/>
            <person name="Sugiura K."/>
            <person name="Sultana R."/>
            <person name="Takenaka Y."/>
            <person name="Taki K."/>
            <person name="Tammoja K."/>
            <person name="Tan S.L."/>
            <person name="Tang S."/>
            <person name="Taylor M.S."/>
            <person name="Tegner J."/>
            <person name="Teichmann S.A."/>
            <person name="Ueda H.R."/>
            <person name="van Nimwegen E."/>
            <person name="Verardo R."/>
            <person name="Wei C.L."/>
            <person name="Yagi K."/>
            <person name="Yamanishi H."/>
            <person name="Zabarovsky E."/>
            <person name="Zhu S."/>
            <person name="Zimmer A."/>
            <person name="Hide W."/>
            <person name="Bult C."/>
            <person name="Grimmond S.M."/>
            <person name="Teasdale R.D."/>
            <person name="Liu E.T."/>
            <person name="Brusic V."/>
            <person name="Quackenbush J."/>
            <person name="Wahlestedt C."/>
            <person name="Mattick J.S."/>
            <person name="Hume D.A."/>
            <person name="Kai C."/>
            <person name="Sasaki D."/>
            <person name="Tomaru Y."/>
            <person name="Fukuda S."/>
            <person name="Kanamori-Katayama M."/>
            <person name="Suzuki M."/>
            <person name="Aoki J."/>
            <person name="Arakawa T."/>
            <person name="Iida J."/>
            <person name="Imamura K."/>
            <person name="Itoh M."/>
            <person name="Kato T."/>
            <person name="Kawaji H."/>
            <person name="Kawagashira N."/>
            <person name="Kawashima T."/>
            <person name="Kojima M."/>
            <person name="Kondo S."/>
            <person name="Konno H."/>
            <person name="Nakano K."/>
            <person name="Ninomiya N."/>
            <person name="Nishio T."/>
            <person name="Okada M."/>
            <person name="Plessy C."/>
            <person name="Shibata K."/>
            <person name="Shiraki T."/>
            <person name="Suzuki S."/>
            <person name="Tagami M."/>
            <person name="Waki K."/>
            <person name="Watahiki A."/>
            <person name="Okamura-Oho Y."/>
            <person name="Suzuki H."/>
            <person name="Kawai J."/>
            <person name="Hayashizaki Y."/>
        </authorList>
    </citation>
    <scope>NUCLEOTIDE SEQUENCE [LARGE SCALE MRNA]</scope>
    <source>
        <strain>C57BL/6J</strain>
        <tissue>Pancreas</tissue>
    </source>
</reference>
<reference key="3">
    <citation type="journal article" date="2004" name="Genome Res.">
        <title>The status, quality, and expansion of the NIH full-length cDNA project: the Mammalian Gene Collection (MGC).</title>
        <authorList>
            <consortium name="The MGC Project Team"/>
        </authorList>
    </citation>
    <scope>NUCLEOTIDE SEQUENCE [LARGE SCALE MRNA]</scope>
    <source>
        <tissue>Eye</tissue>
    </source>
</reference>
<reference key="4">
    <citation type="journal article" date="2001" name="Biochemistry">
        <title>MDP-1 is a new and distinct member of the haloacid dehalogenase family of aspartate-dependent phosphohydrolases.</title>
        <authorList>
            <person name="Selengut J.D."/>
        </authorList>
    </citation>
    <scope>MUTAGENESIS OF ASP-11; ASP-13; SER-69 AND LYS-100</scope>
    <scope>FUNCTION</scope>
</reference>
<reference key="5">
    <citation type="journal article" date="2010" name="Cell">
        <title>A tissue-specific atlas of mouse protein phosphorylation and expression.</title>
        <authorList>
            <person name="Huttlin E.L."/>
            <person name="Jedrychowski M.P."/>
            <person name="Elias J.E."/>
            <person name="Goswami T."/>
            <person name="Rad R."/>
            <person name="Beausoleil S.A."/>
            <person name="Villen J."/>
            <person name="Haas W."/>
            <person name="Sowa M.E."/>
            <person name="Gygi S.P."/>
        </authorList>
    </citation>
    <scope>IDENTIFICATION BY MASS SPECTROMETRY [LARGE SCALE ANALYSIS]</scope>
    <source>
        <tissue>Brain</tissue>
        <tissue>Brown adipose tissue</tissue>
        <tissue>Heart</tissue>
        <tissue>Kidney</tissue>
        <tissue>Liver</tissue>
        <tissue>Lung</tissue>
        <tissue>Pancreas</tissue>
        <tissue>Spleen</tissue>
        <tissue>Testis</tissue>
    </source>
</reference>
<reference key="6">
    <citation type="journal article" date="2004" name="Biochemistry">
        <title>X-ray crystal structure of the hypothetical phosphotyrosine phosphatase MDP-1 of the haloacid dehalogenase superfamily.</title>
        <authorList>
            <person name="Peisach E."/>
            <person name="Selengut J.D."/>
            <person name="Dunaway-Mariano D."/>
            <person name="Allen K.N."/>
        </authorList>
    </citation>
    <scope>X-RAY CRYSTALLOGRAPHY (1.9 ANGSTROMS) OF 1-164</scope>
    <scope>X-RAY CRYSTALLOGRAPHY (1.9 ANGSTROMS) OF 1-164 WITH MAGNESIUM AND TUNGSTATE</scope>
    <scope>FUNCTION</scope>
</reference>
<organism>
    <name type="scientific">Mus musculus</name>
    <name type="common">Mouse</name>
    <dbReference type="NCBI Taxonomy" id="10090"/>
    <lineage>
        <taxon>Eukaryota</taxon>
        <taxon>Metazoa</taxon>
        <taxon>Chordata</taxon>
        <taxon>Craniata</taxon>
        <taxon>Vertebrata</taxon>
        <taxon>Euteleostomi</taxon>
        <taxon>Mammalia</taxon>
        <taxon>Eutheria</taxon>
        <taxon>Euarchontoglires</taxon>
        <taxon>Glires</taxon>
        <taxon>Rodentia</taxon>
        <taxon>Myomorpha</taxon>
        <taxon>Muroidea</taxon>
        <taxon>Muridae</taxon>
        <taxon>Murinae</taxon>
        <taxon>Mus</taxon>
        <taxon>Mus</taxon>
    </lineage>
</organism>
<feature type="chain" id="PRO_0000068828" description="Magnesium-dependent phosphatase 1">
    <location>
        <begin position="1"/>
        <end position="164"/>
    </location>
</feature>
<feature type="active site" description="Nucleophile" evidence="4">
    <location>
        <position position="11"/>
    </location>
</feature>
<feature type="active site" description="Proton donor" evidence="4">
    <location>
        <position position="13"/>
    </location>
</feature>
<feature type="binding site">
    <location>
        <position position="11"/>
    </location>
    <ligand>
        <name>Mg(2+)</name>
        <dbReference type="ChEBI" id="CHEBI:18420"/>
    </ligand>
</feature>
<feature type="binding site">
    <location>
        <position position="12"/>
    </location>
    <ligand>
        <name>phosphate</name>
        <dbReference type="ChEBI" id="CHEBI:43474"/>
    </ligand>
</feature>
<feature type="binding site">
    <location>
        <position position="13"/>
    </location>
    <ligand>
        <name>Mg(2+)</name>
        <dbReference type="ChEBI" id="CHEBI:18420"/>
    </ligand>
</feature>
<feature type="binding site">
    <location>
        <position position="13"/>
    </location>
    <ligand>
        <name>phosphate</name>
        <dbReference type="ChEBI" id="CHEBI:43474"/>
    </ligand>
</feature>
<feature type="binding site" evidence="4">
    <location>
        <position position="20"/>
    </location>
    <ligand>
        <name>substrate</name>
    </ligand>
</feature>
<feature type="binding site">
    <location>
        <position position="69"/>
    </location>
    <ligand>
        <name>phosphate</name>
        <dbReference type="ChEBI" id="CHEBI:43474"/>
    </ligand>
</feature>
<feature type="binding site">
    <location>
        <position position="70"/>
    </location>
    <ligand>
        <name>phosphate</name>
        <dbReference type="ChEBI" id="CHEBI:43474"/>
    </ligand>
</feature>
<feature type="binding site" evidence="4">
    <location>
        <position position="70"/>
    </location>
    <ligand>
        <name>substrate</name>
    </ligand>
</feature>
<feature type="binding site">
    <location>
        <position position="100"/>
    </location>
    <ligand>
        <name>phosphate</name>
        <dbReference type="ChEBI" id="CHEBI:43474"/>
    </ligand>
</feature>
<feature type="binding site">
    <location>
        <position position="123"/>
    </location>
    <ligand>
        <name>Mg(2+)</name>
        <dbReference type="ChEBI" id="CHEBI:18420"/>
    </ligand>
</feature>
<feature type="mutagenesis site" description="Abolishes enzymatic activity." evidence="2">
    <original>D</original>
    <variation>N</variation>
    <variation>E</variation>
    <location>
        <position position="11"/>
    </location>
</feature>
<feature type="mutagenesis site" description="92% loss of enzymatic activity." evidence="2">
    <original>D</original>
    <variation>N</variation>
    <location>
        <position position="13"/>
    </location>
</feature>
<feature type="mutagenesis site" description="Abolishes enzymatic activity." evidence="2">
    <original>S</original>
    <variation>A</variation>
    <location>
        <position position="69"/>
    </location>
</feature>
<feature type="mutagenesis site" description="Abolishes enzymatic activity." evidence="2">
    <original>K</original>
    <variation>R</variation>
    <location>
        <position position="100"/>
    </location>
</feature>
<feature type="mutagenesis site" description="50% decrease in enzymatic activity." evidence="1">
    <original>H</original>
    <variation>K</variation>
    <variation>A</variation>
    <location>
        <position position="103"/>
    </location>
</feature>
<feature type="mutagenesis site" description="Abolishes enzymatic activity.">
    <original>D</original>
    <variation>N</variation>
    <location>
        <position position="122"/>
    </location>
</feature>
<feature type="mutagenesis site" description="Abolishes enzymatic activity.">
    <original>D</original>
    <variation>N</variation>
    <location>
        <position position="123"/>
    </location>
</feature>
<feature type="mutagenesis site" description="50% decrease in enzymatic activity.">
    <original>N</original>
    <variation>D</variation>
    <location>
        <position position="127"/>
    </location>
</feature>
<feature type="mutagenesis site" description="No effect on enzymatic activity." evidence="1">
    <original>C</original>
    <variation>S</variation>
    <variation>A</variation>
    <variation>G</variation>
    <location>
        <position position="138"/>
    </location>
</feature>
<feature type="strand" evidence="5">
    <location>
        <begin position="6"/>
        <end position="10"/>
    </location>
</feature>
<feature type="turn" evidence="5">
    <location>
        <begin position="13"/>
        <end position="15"/>
    </location>
</feature>
<feature type="strand" evidence="5">
    <location>
        <begin position="16"/>
        <end position="19"/>
    </location>
</feature>
<feature type="turn" evidence="5">
    <location>
        <begin position="21"/>
        <end position="23"/>
    </location>
</feature>
<feature type="strand" evidence="5">
    <location>
        <begin position="29"/>
        <end position="31"/>
    </location>
</feature>
<feature type="strand" evidence="5">
    <location>
        <begin position="37"/>
        <end position="39"/>
    </location>
</feature>
<feature type="helix" evidence="5">
    <location>
        <begin position="51"/>
        <end position="60"/>
    </location>
</feature>
<feature type="strand" evidence="5">
    <location>
        <begin position="65"/>
        <end position="69"/>
    </location>
</feature>
<feature type="helix" evidence="5">
    <location>
        <begin position="74"/>
        <end position="83"/>
    </location>
</feature>
<feature type="helix" evidence="5">
    <location>
        <begin position="87"/>
        <end position="89"/>
    </location>
</feature>
<feature type="strand" evidence="5">
    <location>
        <begin position="90"/>
        <end position="98"/>
    </location>
</feature>
<feature type="helix" evidence="5">
    <location>
        <begin position="100"/>
        <end position="111"/>
    </location>
</feature>
<feature type="helix" evidence="5">
    <location>
        <begin position="115"/>
        <end position="117"/>
    </location>
</feature>
<feature type="strand" evidence="5">
    <location>
        <begin position="118"/>
        <end position="123"/>
    </location>
</feature>
<feature type="helix" evidence="5">
    <location>
        <begin position="125"/>
        <end position="132"/>
    </location>
</feature>
<feature type="turn" evidence="5">
    <location>
        <begin position="133"/>
        <end position="135"/>
    </location>
</feature>
<feature type="strand" evidence="5">
    <location>
        <begin position="137"/>
        <end position="140"/>
    </location>
</feature>
<feature type="strand" evidence="5">
    <location>
        <begin position="142"/>
        <end position="144"/>
    </location>
</feature>
<feature type="helix" evidence="5">
    <location>
        <begin position="147"/>
        <end position="160"/>
    </location>
</feature>
<feature type="turn" evidence="6">
    <location>
        <begin position="161"/>
        <end position="163"/>
    </location>
</feature>
<protein>
    <recommendedName>
        <fullName>Magnesium-dependent phosphatase 1</fullName>
        <shortName>MDP-1</shortName>
        <ecNumber>3.1.3.-</ecNumber>
        <ecNumber>3.1.3.48</ecNumber>
    </recommendedName>
</protein>
<proteinExistence type="evidence at protein level"/>